<sequence>MAKIIRIKGKIVGKDEPMVFSKEYNVLKESDALEIMYSDMGSKHSVKRANIQVLEISEISQEEVLDPIVRKTLEMY</sequence>
<comment type="subunit">
    <text evidence="1">Part of the 50S ribosomal subunit. Binds 23S rRNA.</text>
</comment>
<comment type="similarity">
    <text evidence="1">Belongs to the eukaryotic ribosomal protein eL20 family.</text>
</comment>
<dbReference type="EMBL" id="CP000742">
    <property type="protein sequence ID" value="ABR54975.1"/>
    <property type="molecule type" value="Genomic_DNA"/>
</dbReference>
<dbReference type="RefSeq" id="WP_012065890.1">
    <property type="nucleotide sequence ID" value="NC_009634.1"/>
</dbReference>
<dbReference type="SMR" id="A6UR53"/>
<dbReference type="STRING" id="406327.Mevan_1075"/>
<dbReference type="GeneID" id="5325348"/>
<dbReference type="KEGG" id="mvn:Mevan_1075"/>
<dbReference type="eggNOG" id="arCOG04175">
    <property type="taxonomic scope" value="Archaea"/>
</dbReference>
<dbReference type="HOGENOM" id="CLU_177460_0_1_2"/>
<dbReference type="OrthoDB" id="191241at2157"/>
<dbReference type="Proteomes" id="UP000001107">
    <property type="component" value="Chromosome"/>
</dbReference>
<dbReference type="GO" id="GO:1990904">
    <property type="term" value="C:ribonucleoprotein complex"/>
    <property type="evidence" value="ECO:0007669"/>
    <property type="project" value="UniProtKB-KW"/>
</dbReference>
<dbReference type="GO" id="GO:0005840">
    <property type="term" value="C:ribosome"/>
    <property type="evidence" value="ECO:0007669"/>
    <property type="project" value="UniProtKB-KW"/>
</dbReference>
<dbReference type="GO" id="GO:0070180">
    <property type="term" value="F:large ribosomal subunit rRNA binding"/>
    <property type="evidence" value="ECO:0007669"/>
    <property type="project" value="UniProtKB-UniRule"/>
</dbReference>
<dbReference type="GO" id="GO:0003735">
    <property type="term" value="F:structural constituent of ribosome"/>
    <property type="evidence" value="ECO:0007669"/>
    <property type="project" value="InterPro"/>
</dbReference>
<dbReference type="GO" id="GO:0006412">
    <property type="term" value="P:translation"/>
    <property type="evidence" value="ECO:0007669"/>
    <property type="project" value="UniProtKB-UniRule"/>
</dbReference>
<dbReference type="Gene3D" id="3.10.20.10">
    <property type="match status" value="1"/>
</dbReference>
<dbReference type="HAMAP" id="MF_00273">
    <property type="entry name" value="Ribosomal_eL20"/>
    <property type="match status" value="1"/>
</dbReference>
<dbReference type="InterPro" id="IPR028877">
    <property type="entry name" value="Ribosomal_eL20"/>
</dbReference>
<dbReference type="InterPro" id="IPR023573">
    <property type="entry name" value="Ribosomal_eL20_dom"/>
</dbReference>
<dbReference type="NCBIfam" id="NF001981">
    <property type="entry name" value="PRK00773.1-1"/>
    <property type="match status" value="1"/>
</dbReference>
<dbReference type="Pfam" id="PF01775">
    <property type="entry name" value="Ribosomal_L18A"/>
    <property type="match status" value="1"/>
</dbReference>
<dbReference type="SUPFAM" id="SSF160374">
    <property type="entry name" value="RplX-like"/>
    <property type="match status" value="1"/>
</dbReference>
<protein>
    <recommendedName>
        <fullName evidence="1">Large ribosomal subunit protein eL20</fullName>
    </recommendedName>
    <alternativeName>
        <fullName evidence="2">50S ribosomal protein L18Ae</fullName>
    </alternativeName>
    <alternativeName>
        <fullName evidence="1">50S ribosomal protein L20e</fullName>
    </alternativeName>
    <alternativeName>
        <fullName evidence="1">50S ribosomal protein LX</fullName>
    </alternativeName>
</protein>
<evidence type="ECO:0000255" key="1">
    <source>
        <dbReference type="HAMAP-Rule" id="MF_00273"/>
    </source>
</evidence>
<evidence type="ECO:0000305" key="2"/>
<name>RL18A_METVS</name>
<accession>A6UR53</accession>
<proteinExistence type="inferred from homology"/>
<organism>
    <name type="scientific">Methanococcus vannielii (strain ATCC 35089 / DSM 1224 / JCM 13029 / OCM 148 / SB)</name>
    <dbReference type="NCBI Taxonomy" id="406327"/>
    <lineage>
        <taxon>Archaea</taxon>
        <taxon>Methanobacteriati</taxon>
        <taxon>Methanobacteriota</taxon>
        <taxon>Methanomada group</taxon>
        <taxon>Methanococci</taxon>
        <taxon>Methanococcales</taxon>
        <taxon>Methanococcaceae</taxon>
        <taxon>Methanococcus</taxon>
    </lineage>
</organism>
<keyword id="KW-0687">Ribonucleoprotein</keyword>
<keyword id="KW-0689">Ribosomal protein</keyword>
<keyword id="KW-0694">RNA-binding</keyword>
<keyword id="KW-0699">rRNA-binding</keyword>
<feature type="chain" id="PRO_1000003669" description="Large ribosomal subunit protein eL20">
    <location>
        <begin position="1"/>
        <end position="76"/>
    </location>
</feature>
<gene>
    <name evidence="1" type="primary">rpl18a</name>
    <name evidence="1" type="synonym">rpl20e</name>
    <name evidence="1" type="synonym">rplX</name>
    <name type="ordered locus">Mevan_1075</name>
</gene>
<reference key="1">
    <citation type="submission" date="2007-06" db="EMBL/GenBank/DDBJ databases">
        <title>Complete sequence of Methanococcus vannielii SB.</title>
        <authorList>
            <consortium name="US DOE Joint Genome Institute"/>
            <person name="Copeland A."/>
            <person name="Lucas S."/>
            <person name="Lapidus A."/>
            <person name="Barry K."/>
            <person name="Glavina del Rio T."/>
            <person name="Dalin E."/>
            <person name="Tice H."/>
            <person name="Pitluck S."/>
            <person name="Chain P."/>
            <person name="Malfatti S."/>
            <person name="Shin M."/>
            <person name="Vergez L."/>
            <person name="Schmutz J."/>
            <person name="Larimer F."/>
            <person name="Land M."/>
            <person name="Hauser L."/>
            <person name="Kyrpides N."/>
            <person name="Anderson I."/>
            <person name="Sieprawska-Lupa M."/>
            <person name="Whitman W.B."/>
            <person name="Richardson P."/>
        </authorList>
    </citation>
    <scope>NUCLEOTIDE SEQUENCE [LARGE SCALE GENOMIC DNA]</scope>
    <source>
        <strain>ATCC 35089 / DSM 1224 / JCM 13029 / OCM 148 / SB</strain>
    </source>
</reference>